<organism>
    <name type="scientific">Thermotoga maritima (strain ATCC 43589 / DSM 3109 / JCM 10099 / NBRC 100826 / MSB8)</name>
    <dbReference type="NCBI Taxonomy" id="243274"/>
    <lineage>
        <taxon>Bacteria</taxon>
        <taxon>Thermotogati</taxon>
        <taxon>Thermotogota</taxon>
        <taxon>Thermotogae</taxon>
        <taxon>Thermotogales</taxon>
        <taxon>Thermotogaceae</taxon>
        <taxon>Thermotoga</taxon>
    </lineage>
</organism>
<proteinExistence type="evidence at protein level"/>
<sequence length="206" mass="22987">MNVLALDTSQRIRIGLRKGEDLFEISYTGEKKHAEILPVVVKKLLDELDLKVKDLDVVGVGIGPGGLTGLRVGIATVVGLVSPYDIPVAPLNSFEMTAKSCPADGVVLVARRARKGYHYCAVYLKDKGLNPLKEPSVVSDEELEEITKEFSPKIVLKDDLLISPAVLVEESERLFREKKTIHYYEIEPLYLQKSIAELNWEKKKRG</sequence>
<gene>
    <name type="primary">tsaB</name>
    <name type="ordered locus">TM_0874</name>
    <name type="ORF">Tmari_0876</name>
</gene>
<reference key="1">
    <citation type="journal article" date="1999" name="Nature">
        <title>Evidence for lateral gene transfer between Archaea and Bacteria from genome sequence of Thermotoga maritima.</title>
        <authorList>
            <person name="Nelson K.E."/>
            <person name="Clayton R.A."/>
            <person name="Gill S.R."/>
            <person name="Gwinn M.L."/>
            <person name="Dodson R.J."/>
            <person name="Haft D.H."/>
            <person name="Hickey E.K."/>
            <person name="Peterson J.D."/>
            <person name="Nelson W.C."/>
            <person name="Ketchum K.A."/>
            <person name="McDonald L.A."/>
            <person name="Utterback T.R."/>
            <person name="Malek J.A."/>
            <person name="Linher K.D."/>
            <person name="Garrett M.M."/>
            <person name="Stewart A.M."/>
            <person name="Cotton M.D."/>
            <person name="Pratt M.S."/>
            <person name="Phillips C.A."/>
            <person name="Richardson D.L."/>
            <person name="Heidelberg J.F."/>
            <person name="Sutton G.G."/>
            <person name="Fleischmann R.D."/>
            <person name="Eisen J.A."/>
            <person name="White O."/>
            <person name="Salzberg S.L."/>
            <person name="Smith H.O."/>
            <person name="Venter J.C."/>
            <person name="Fraser C.M."/>
        </authorList>
    </citation>
    <scope>NUCLEOTIDE SEQUENCE [LARGE SCALE GENOMIC DNA]</scope>
    <source>
        <strain>ATCC 43589 / DSM 3109 / JCM 10099 / NBRC 100826 / MSB8</strain>
    </source>
</reference>
<reference key="2">
    <citation type="journal article" date="2013" name="PLoS Genet.">
        <title>The genome organization of Thermotoga maritima reflects its lifestyle.</title>
        <authorList>
            <person name="Latif H."/>
            <person name="Lerman J.A."/>
            <person name="Portnoy V.A."/>
            <person name="Tarasova Y."/>
            <person name="Nagarajan H."/>
            <person name="Schrimpe-Rutledge A.C."/>
            <person name="Smith R.D."/>
            <person name="Adkins J.N."/>
            <person name="Lee D.H."/>
            <person name="Qiu Y."/>
            <person name="Zengler K."/>
        </authorList>
    </citation>
    <scope>NUCLEOTIDE SEQUENCE [LARGE SCALE GENOMIC DNA]</scope>
    <source>
        <strain>ATCC 43589 / DSM 3109 / JCM 10099 / NBRC 100826 / MSB8</strain>
    </source>
</reference>
<reference key="3">
    <citation type="journal article" date="2010" name="Acta Crystallogr. F">
        <title>Structure of an essential bacterial protein YeaZ (TM0874) from Thermotoga maritima at 2.5 A resolution.</title>
        <authorList>
            <person name="Xu Q."/>
            <person name="McMullan D."/>
            <person name="Jaroszewski L."/>
            <person name="Krishna S.S."/>
            <person name="Elsliger M.A."/>
            <person name="Yeh A.P."/>
            <person name="Abdubek P."/>
            <person name="Astakhova T."/>
            <person name="Axelrod H.L."/>
            <person name="Carlton D."/>
            <person name="Chiu H.J."/>
            <person name="Clayton T."/>
            <person name="Duan L."/>
            <person name="Feuerhelm J."/>
            <person name="Grant J."/>
            <person name="Han G.W."/>
            <person name="Jin K.K."/>
            <person name="Klock H.E."/>
            <person name="Knuth M.W."/>
            <person name="Miller M.D."/>
            <person name="Morse A.T."/>
            <person name="Nigoghossian E."/>
            <person name="Okach L."/>
            <person name="Oommachen S."/>
            <person name="Paulsen J."/>
            <person name="Reyes R."/>
            <person name="Rife C.L."/>
            <person name="van den Bedem H."/>
            <person name="Hodgson K.O."/>
            <person name="Wooley J."/>
            <person name="Deacon A.M."/>
            <person name="Godzik A."/>
            <person name="Lesley S.A."/>
            <person name="Wilson I.A."/>
        </authorList>
    </citation>
    <scope>X-RAY CRYSTALLOGRAPHY (2.50 ANGSTROMS)</scope>
    <scope>SUBUNIT</scope>
</reference>
<reference key="4">
    <citation type="journal article" date="2018" name="Nucleic Acids Res.">
        <title>The structure of the TsaB/TsaD/TsaE complex reveals an unexpected mechanism for the bacterial t6A tRNA-modification.</title>
        <authorList>
            <person name="Missoury S."/>
            <person name="Plancqueel S."/>
            <person name="Li de la Sierra-Gallay I."/>
            <person name="Zhang W."/>
            <person name="Liger D."/>
            <person name="Durand D."/>
            <person name="Dammak R."/>
            <person name="Collinet B."/>
            <person name="van Tilbeurgh H."/>
        </authorList>
    </citation>
    <scope>X-RAY CRYSTALLOGRAPHY (2.89 ANGSTROMS)</scope>
    <scope>SUBUNIT</scope>
</reference>
<evidence type="ECO:0000250" key="1"/>
<evidence type="ECO:0000269" key="2">
    <source>
    </source>
</evidence>
<evidence type="ECO:0000269" key="3">
    <source>
    </source>
</evidence>
<evidence type="ECO:0000305" key="4"/>
<evidence type="ECO:0007829" key="5">
    <source>
        <dbReference type="PDB" id="2A6A"/>
    </source>
</evidence>
<evidence type="ECO:0007829" key="6">
    <source>
        <dbReference type="PDB" id="6N9A"/>
    </source>
</evidence>
<evidence type="ECO:0007829" key="7">
    <source>
        <dbReference type="PDB" id="6S84"/>
    </source>
</evidence>
<protein>
    <recommendedName>
        <fullName>tRNA threonylcarbamoyladenosine biosynthesis protein TsaB</fullName>
    </recommendedName>
    <alternativeName>
        <fullName>t(6)A37 threonylcarbamoyladenosine biosynthesis protein TsaB</fullName>
    </alternativeName>
</protein>
<comment type="function">
    <text evidence="1">Required for the formation of a threonylcarbamoyl group on adenosine at position 37 (t(6)A37) in tRNAs that read codons beginning with adenine. Is involved in the transfer of the threonylcarbamoyl moiety of threonylcarbamoyl-AMP (TC-AMP) to the N6 group of A37, together with TsaD and TsaE; this reaction does not require ATP in vitro. TsaB seems to play an indirect role in the t(6)A biosynthesis pathway, possibly in regulating the core enzymatic function of TsaD (By similarity).</text>
</comment>
<comment type="subunit">
    <text evidence="2 3">Homodimer (PubMed:20944216). Forms a hexamer composed of two TsaB, TsaD and TsaE trimers (PubMed:29741707).</text>
</comment>
<comment type="subcellular location">
    <subcellularLocation>
        <location evidence="1">Cytoplasm</location>
    </subcellularLocation>
</comment>
<comment type="similarity">
    <text evidence="4">Belongs to the KAE1 / TsaD family. TsaB subfamily.</text>
</comment>
<keyword id="KW-0002">3D-structure</keyword>
<keyword id="KW-0963">Cytoplasm</keyword>
<keyword id="KW-1185">Reference proteome</keyword>
<keyword id="KW-0819">tRNA processing</keyword>
<accession>Q9WZX7</accession>
<accession>G4FCV1</accession>
<dbReference type="EMBL" id="AE000512">
    <property type="protein sequence ID" value="AAD35955.1"/>
    <property type="molecule type" value="Genomic_DNA"/>
</dbReference>
<dbReference type="EMBL" id="CP004077">
    <property type="protein sequence ID" value="AGL49801.1"/>
    <property type="molecule type" value="Genomic_DNA"/>
</dbReference>
<dbReference type="PIR" id="D72323">
    <property type="entry name" value="D72323"/>
</dbReference>
<dbReference type="RefSeq" id="NP_228682.1">
    <property type="nucleotide sequence ID" value="NC_000853.1"/>
</dbReference>
<dbReference type="RefSeq" id="WP_004080725.1">
    <property type="nucleotide sequence ID" value="NC_000853.1"/>
</dbReference>
<dbReference type="PDB" id="2A6A">
    <property type="method" value="X-ray"/>
    <property type="resolution" value="2.50 A"/>
    <property type="chains" value="A/B=1-206"/>
</dbReference>
<dbReference type="PDB" id="6N9A">
    <property type="method" value="X-ray"/>
    <property type="resolution" value="2.50 A"/>
    <property type="chains" value="B=2-206"/>
</dbReference>
<dbReference type="PDB" id="6NAK">
    <property type="method" value="X-ray"/>
    <property type="resolution" value="3.14 A"/>
    <property type="chains" value="A/C=1-206"/>
</dbReference>
<dbReference type="PDB" id="6S84">
    <property type="method" value="X-ray"/>
    <property type="resolution" value="2.89 A"/>
    <property type="chains" value="C/F=1-206"/>
</dbReference>
<dbReference type="PDBsum" id="2A6A"/>
<dbReference type="PDBsum" id="6N9A"/>
<dbReference type="PDBsum" id="6NAK"/>
<dbReference type="PDBsum" id="6S84"/>
<dbReference type="SMR" id="Q9WZX7"/>
<dbReference type="FunCoup" id="Q9WZX7">
    <property type="interactions" value="301"/>
</dbReference>
<dbReference type="STRING" id="243274.TM_0874"/>
<dbReference type="PaxDb" id="243274-THEMA_00265"/>
<dbReference type="DNASU" id="898547"/>
<dbReference type="EnsemblBacteria" id="AAD35955">
    <property type="protein sequence ID" value="AAD35955"/>
    <property type="gene ID" value="TM_0874"/>
</dbReference>
<dbReference type="KEGG" id="tma:TM0874"/>
<dbReference type="KEGG" id="tmi:THEMA_00265"/>
<dbReference type="KEGG" id="tmm:Tmari_0876"/>
<dbReference type="KEGG" id="tmw:THMA_0896"/>
<dbReference type="PATRIC" id="fig|243274.17.peg.875"/>
<dbReference type="eggNOG" id="COG1214">
    <property type="taxonomic scope" value="Bacteria"/>
</dbReference>
<dbReference type="InParanoid" id="Q9WZX7"/>
<dbReference type="OrthoDB" id="9784166at2"/>
<dbReference type="EvolutionaryTrace" id="Q9WZX7"/>
<dbReference type="Proteomes" id="UP000008183">
    <property type="component" value="Chromosome"/>
</dbReference>
<dbReference type="GO" id="GO:0005829">
    <property type="term" value="C:cytosol"/>
    <property type="evidence" value="ECO:0000318"/>
    <property type="project" value="GO_Central"/>
</dbReference>
<dbReference type="GO" id="GO:0002949">
    <property type="term" value="P:tRNA threonylcarbamoyladenosine modification"/>
    <property type="evidence" value="ECO:0007669"/>
    <property type="project" value="InterPro"/>
</dbReference>
<dbReference type="CDD" id="cd24032">
    <property type="entry name" value="ASKHA_NBD_TsaB"/>
    <property type="match status" value="1"/>
</dbReference>
<dbReference type="Gene3D" id="3.30.420.200">
    <property type="match status" value="1"/>
</dbReference>
<dbReference type="Gene3D" id="3.30.420.40">
    <property type="match status" value="1"/>
</dbReference>
<dbReference type="InterPro" id="IPR043129">
    <property type="entry name" value="ATPase_NBD"/>
</dbReference>
<dbReference type="InterPro" id="IPR000905">
    <property type="entry name" value="Gcp-like_dom"/>
</dbReference>
<dbReference type="InterPro" id="IPR022496">
    <property type="entry name" value="T6A_TsaB"/>
</dbReference>
<dbReference type="NCBIfam" id="TIGR03725">
    <property type="entry name" value="T6A_YeaZ"/>
    <property type="match status" value="1"/>
</dbReference>
<dbReference type="Pfam" id="PF00814">
    <property type="entry name" value="TsaD"/>
    <property type="match status" value="1"/>
</dbReference>
<dbReference type="SUPFAM" id="SSF53067">
    <property type="entry name" value="Actin-like ATPase domain"/>
    <property type="match status" value="2"/>
</dbReference>
<feature type="chain" id="PRO_0000423848" description="tRNA threonylcarbamoyladenosine biosynthesis protein TsaB">
    <location>
        <begin position="1"/>
        <end position="206"/>
    </location>
</feature>
<feature type="strand" evidence="5">
    <location>
        <begin position="2"/>
        <end position="7"/>
    </location>
</feature>
<feature type="strand" evidence="5">
    <location>
        <begin position="9"/>
        <end position="18"/>
    </location>
</feature>
<feature type="strand" evidence="5">
    <location>
        <begin position="21"/>
        <end position="29"/>
    </location>
</feature>
<feature type="helix" evidence="5">
    <location>
        <begin position="31"/>
        <end position="35"/>
    </location>
</feature>
<feature type="helix" evidence="5">
    <location>
        <begin position="36"/>
        <end position="48"/>
    </location>
</feature>
<feature type="helix" evidence="5">
    <location>
        <begin position="52"/>
        <end position="54"/>
    </location>
</feature>
<feature type="strand" evidence="5">
    <location>
        <begin position="56"/>
        <end position="61"/>
    </location>
</feature>
<feature type="strand" evidence="7">
    <location>
        <begin position="63"/>
        <end position="65"/>
    </location>
</feature>
<feature type="helix" evidence="5">
    <location>
        <begin position="67"/>
        <end position="81"/>
    </location>
</feature>
<feature type="helix" evidence="5">
    <location>
        <begin position="82"/>
        <end position="84"/>
    </location>
</feature>
<feature type="strand" evidence="5">
    <location>
        <begin position="88"/>
        <end position="91"/>
    </location>
</feature>
<feature type="helix" evidence="5">
    <location>
        <begin position="93"/>
        <end position="99"/>
    </location>
</feature>
<feature type="strand" evidence="6">
    <location>
        <begin position="101"/>
        <end position="103"/>
    </location>
</feature>
<feature type="strand" evidence="5">
    <location>
        <begin position="105"/>
        <end position="112"/>
    </location>
</feature>
<feature type="strand" evidence="5">
    <location>
        <begin position="117"/>
        <end position="128"/>
    </location>
</feature>
<feature type="strand" evidence="5">
    <location>
        <begin position="130"/>
        <end position="139"/>
    </location>
</feature>
<feature type="helix" evidence="5">
    <location>
        <begin position="140"/>
        <end position="150"/>
    </location>
</feature>
<feature type="strand" evidence="5">
    <location>
        <begin position="153"/>
        <end position="159"/>
    </location>
</feature>
<feature type="helix" evidence="5">
    <location>
        <begin position="164"/>
        <end position="176"/>
    </location>
</feature>
<feature type="helix" evidence="5">
    <location>
        <begin position="183"/>
        <end position="185"/>
    </location>
</feature>
<feature type="helix" evidence="5">
    <location>
        <begin position="188"/>
        <end position="191"/>
    </location>
</feature>
<feature type="helix" evidence="6">
    <location>
        <begin position="195"/>
        <end position="198"/>
    </location>
</feature>
<feature type="strand" evidence="6">
    <location>
        <begin position="200"/>
        <end position="203"/>
    </location>
</feature>
<name>TSAB_THEMA</name>